<name>RBSD_PECAS</name>
<sequence>MKKAALLNSDISSVIARLGHTDSLVIGDAGLPIPETTTRIDLALTHNVPTFLQVVNVVTSEMQVEAAILAEEMIEKNPAVHDALLDQLKRLEQHQGNSIALHYVSHEEFKTQSGKSRAIIRSGECSPYANVILCAGVTF</sequence>
<comment type="function">
    <text evidence="1">Catalyzes the interconversion of beta-pyran and beta-furan forms of D-ribose.</text>
</comment>
<comment type="catalytic activity">
    <reaction evidence="1">
        <text>beta-D-ribopyranose = beta-D-ribofuranose</text>
        <dbReference type="Rhea" id="RHEA:25432"/>
        <dbReference type="ChEBI" id="CHEBI:27476"/>
        <dbReference type="ChEBI" id="CHEBI:47002"/>
        <dbReference type="EC" id="5.4.99.62"/>
    </reaction>
</comment>
<comment type="pathway">
    <text evidence="1">Carbohydrate metabolism; D-ribose degradation; D-ribose 5-phosphate from beta-D-ribopyranose: step 1/2.</text>
</comment>
<comment type="subunit">
    <text evidence="1">Homodecamer.</text>
</comment>
<comment type="subcellular location">
    <subcellularLocation>
        <location evidence="1">Cytoplasm</location>
    </subcellularLocation>
</comment>
<comment type="similarity">
    <text evidence="1">Belongs to the RbsD / FucU family. RbsD subfamily.</text>
</comment>
<gene>
    <name evidence="1" type="primary">rbsD</name>
    <name type="ordered locus">ECA0010</name>
</gene>
<protein>
    <recommendedName>
        <fullName evidence="1">D-ribose pyranase</fullName>
        <ecNumber evidence="1">5.4.99.62</ecNumber>
    </recommendedName>
</protein>
<evidence type="ECO:0000255" key="1">
    <source>
        <dbReference type="HAMAP-Rule" id="MF_01661"/>
    </source>
</evidence>
<organism>
    <name type="scientific">Pectobacterium atrosepticum (strain SCRI 1043 / ATCC BAA-672)</name>
    <name type="common">Erwinia carotovora subsp. atroseptica</name>
    <dbReference type="NCBI Taxonomy" id="218491"/>
    <lineage>
        <taxon>Bacteria</taxon>
        <taxon>Pseudomonadati</taxon>
        <taxon>Pseudomonadota</taxon>
        <taxon>Gammaproteobacteria</taxon>
        <taxon>Enterobacterales</taxon>
        <taxon>Pectobacteriaceae</taxon>
        <taxon>Pectobacterium</taxon>
    </lineage>
</organism>
<reference key="1">
    <citation type="journal article" date="2004" name="Proc. Natl. Acad. Sci. U.S.A.">
        <title>Genome sequence of the enterobacterial phytopathogen Erwinia carotovora subsp. atroseptica and characterization of virulence factors.</title>
        <authorList>
            <person name="Bell K.S."/>
            <person name="Sebaihia M."/>
            <person name="Pritchard L."/>
            <person name="Holden M.T.G."/>
            <person name="Hyman L.J."/>
            <person name="Holeva M.C."/>
            <person name="Thomson N.R."/>
            <person name="Bentley S.D."/>
            <person name="Churcher L.J.C."/>
            <person name="Mungall K."/>
            <person name="Atkin R."/>
            <person name="Bason N."/>
            <person name="Brooks K."/>
            <person name="Chillingworth T."/>
            <person name="Clark K."/>
            <person name="Doggett J."/>
            <person name="Fraser A."/>
            <person name="Hance Z."/>
            <person name="Hauser H."/>
            <person name="Jagels K."/>
            <person name="Moule S."/>
            <person name="Norbertczak H."/>
            <person name="Ormond D."/>
            <person name="Price C."/>
            <person name="Quail M.A."/>
            <person name="Sanders M."/>
            <person name="Walker D."/>
            <person name="Whitehead S."/>
            <person name="Salmond G.P.C."/>
            <person name="Birch P.R.J."/>
            <person name="Parkhill J."/>
            <person name="Toth I.K."/>
        </authorList>
    </citation>
    <scope>NUCLEOTIDE SEQUENCE [LARGE SCALE GENOMIC DNA]</scope>
    <source>
        <strain>SCRI 1043 / ATCC BAA-672</strain>
    </source>
</reference>
<feature type="chain" id="PRO_0000346195" description="D-ribose pyranase">
    <location>
        <begin position="1"/>
        <end position="139"/>
    </location>
</feature>
<feature type="active site" description="Proton donor" evidence="1">
    <location>
        <position position="20"/>
    </location>
</feature>
<feature type="binding site" evidence="1">
    <location>
        <position position="28"/>
    </location>
    <ligand>
        <name>substrate</name>
    </ligand>
</feature>
<feature type="binding site" evidence="1">
    <location>
        <position position="106"/>
    </location>
    <ligand>
        <name>substrate</name>
    </ligand>
</feature>
<feature type="binding site" evidence="1">
    <location>
        <begin position="128"/>
        <end position="130"/>
    </location>
    <ligand>
        <name>substrate</name>
    </ligand>
</feature>
<accession>Q6DB88</accession>
<keyword id="KW-0119">Carbohydrate metabolism</keyword>
<keyword id="KW-0963">Cytoplasm</keyword>
<keyword id="KW-0413">Isomerase</keyword>
<keyword id="KW-1185">Reference proteome</keyword>
<dbReference type="EC" id="5.4.99.62" evidence="1"/>
<dbReference type="EMBL" id="BX950851">
    <property type="protein sequence ID" value="CAG72934.1"/>
    <property type="molecule type" value="Genomic_DNA"/>
</dbReference>
<dbReference type="RefSeq" id="WP_011091659.1">
    <property type="nucleotide sequence ID" value="NC_004547.2"/>
</dbReference>
<dbReference type="SMR" id="Q6DB88"/>
<dbReference type="STRING" id="218491.ECA0010"/>
<dbReference type="KEGG" id="eca:ECA0010"/>
<dbReference type="PATRIC" id="fig|218491.5.peg.10"/>
<dbReference type="eggNOG" id="COG1869">
    <property type="taxonomic scope" value="Bacteria"/>
</dbReference>
<dbReference type="HOGENOM" id="CLU_135498_0_0_6"/>
<dbReference type="OrthoDB" id="9805009at2"/>
<dbReference type="UniPathway" id="UPA00916">
    <property type="reaction ID" value="UER00888"/>
</dbReference>
<dbReference type="Proteomes" id="UP000007966">
    <property type="component" value="Chromosome"/>
</dbReference>
<dbReference type="GO" id="GO:0005829">
    <property type="term" value="C:cytosol"/>
    <property type="evidence" value="ECO:0007669"/>
    <property type="project" value="TreeGrafter"/>
</dbReference>
<dbReference type="GO" id="GO:0062193">
    <property type="term" value="F:D-ribose pyranase activity"/>
    <property type="evidence" value="ECO:0007669"/>
    <property type="project" value="UniProtKB-EC"/>
</dbReference>
<dbReference type="GO" id="GO:0016872">
    <property type="term" value="F:intramolecular lyase activity"/>
    <property type="evidence" value="ECO:0007669"/>
    <property type="project" value="UniProtKB-UniRule"/>
</dbReference>
<dbReference type="GO" id="GO:0048029">
    <property type="term" value="F:monosaccharide binding"/>
    <property type="evidence" value="ECO:0007669"/>
    <property type="project" value="InterPro"/>
</dbReference>
<dbReference type="GO" id="GO:0019303">
    <property type="term" value="P:D-ribose catabolic process"/>
    <property type="evidence" value="ECO:0007669"/>
    <property type="project" value="UniProtKB-UniRule"/>
</dbReference>
<dbReference type="FunFam" id="3.40.1650.10:FF:000002">
    <property type="entry name" value="D-ribose pyranase"/>
    <property type="match status" value="1"/>
</dbReference>
<dbReference type="Gene3D" id="3.40.1650.10">
    <property type="entry name" value="RbsD-like domain"/>
    <property type="match status" value="1"/>
</dbReference>
<dbReference type="HAMAP" id="MF_01661">
    <property type="entry name" value="D_rib_pyranase"/>
    <property type="match status" value="1"/>
</dbReference>
<dbReference type="InterPro" id="IPR023064">
    <property type="entry name" value="D-ribose_pyranase"/>
</dbReference>
<dbReference type="InterPro" id="IPR023750">
    <property type="entry name" value="RbsD-like_sf"/>
</dbReference>
<dbReference type="InterPro" id="IPR007721">
    <property type="entry name" value="RbsD_FucU"/>
</dbReference>
<dbReference type="NCBIfam" id="NF008761">
    <property type="entry name" value="PRK11797.1"/>
    <property type="match status" value="1"/>
</dbReference>
<dbReference type="PANTHER" id="PTHR37831">
    <property type="entry name" value="D-RIBOSE PYRANASE"/>
    <property type="match status" value="1"/>
</dbReference>
<dbReference type="PANTHER" id="PTHR37831:SF1">
    <property type="entry name" value="D-RIBOSE PYRANASE"/>
    <property type="match status" value="1"/>
</dbReference>
<dbReference type="Pfam" id="PF05025">
    <property type="entry name" value="RbsD_FucU"/>
    <property type="match status" value="1"/>
</dbReference>
<dbReference type="SUPFAM" id="SSF102546">
    <property type="entry name" value="RbsD-like"/>
    <property type="match status" value="1"/>
</dbReference>
<proteinExistence type="inferred from homology"/>